<keyword id="KW-0067">ATP-binding</keyword>
<keyword id="KW-0520">NAD</keyword>
<keyword id="KW-0547">Nucleotide-binding</keyword>
<keyword id="KW-0548">Nucleotidyltransferase</keyword>
<keyword id="KW-0662">Pyridine nucleotide biosynthesis</keyword>
<keyword id="KW-0808">Transferase</keyword>
<accession>A5IBI8</accession>
<proteinExistence type="inferred from homology"/>
<reference key="1">
    <citation type="submission" date="2006-11" db="EMBL/GenBank/DDBJ databases">
        <title>Identification and characterization of a new conjugation/ type IVA secretion system (trb/tra) of L. pneumophila Corby localized on a mobile genomic island.</title>
        <authorList>
            <person name="Gloeckner G."/>
            <person name="Albert-Weissenberger C."/>
            <person name="Weinmann E."/>
            <person name="Jacobi S."/>
            <person name="Schunder E."/>
            <person name="Steinert M."/>
            <person name="Buchrieser C."/>
            <person name="Hacker J."/>
            <person name="Heuner K."/>
        </authorList>
    </citation>
    <scope>NUCLEOTIDE SEQUENCE [LARGE SCALE GENOMIC DNA]</scope>
    <source>
        <strain>Corby</strain>
    </source>
</reference>
<sequence>MHSIAIFGGTFDPVHNGHIKTSLAIQANFGFDSYYFLPCKSPAIKPPSFASSEQRVEMLKLALKPYPDFKIDTRELDRDTPSYMVYTLQSFRQEYTDSSLTLIIGYDGLLTLPQWYQWEKIISLANLLVINREEFFQQPVPKSVQTLLNQYRNDDKNILLNHHAGSICLYNAGHYDISSTKIREQLKQHKDVKNNLPDLVYDYIKKQGLYQ</sequence>
<name>NADD_LEGPC</name>
<evidence type="ECO:0000255" key="1">
    <source>
        <dbReference type="HAMAP-Rule" id="MF_00244"/>
    </source>
</evidence>
<feature type="chain" id="PRO_0000336700" description="Probable nicotinate-nucleotide adenylyltransferase">
    <location>
        <begin position="1"/>
        <end position="211"/>
    </location>
</feature>
<comment type="function">
    <text evidence="1">Catalyzes the reversible adenylation of nicotinate mononucleotide (NaMN) to nicotinic acid adenine dinucleotide (NaAD).</text>
</comment>
<comment type="catalytic activity">
    <reaction evidence="1">
        <text>nicotinate beta-D-ribonucleotide + ATP + H(+) = deamido-NAD(+) + diphosphate</text>
        <dbReference type="Rhea" id="RHEA:22860"/>
        <dbReference type="ChEBI" id="CHEBI:15378"/>
        <dbReference type="ChEBI" id="CHEBI:30616"/>
        <dbReference type="ChEBI" id="CHEBI:33019"/>
        <dbReference type="ChEBI" id="CHEBI:57502"/>
        <dbReference type="ChEBI" id="CHEBI:58437"/>
        <dbReference type="EC" id="2.7.7.18"/>
    </reaction>
</comment>
<comment type="pathway">
    <text evidence="1">Cofactor biosynthesis; NAD(+) biosynthesis; deamido-NAD(+) from nicotinate D-ribonucleotide: step 1/1.</text>
</comment>
<comment type="similarity">
    <text evidence="1">Belongs to the NadD family.</text>
</comment>
<gene>
    <name evidence="1" type="primary">nadD</name>
    <name type="ordered locus">LPC_0761</name>
</gene>
<organism>
    <name type="scientific">Legionella pneumophila (strain Corby)</name>
    <dbReference type="NCBI Taxonomy" id="400673"/>
    <lineage>
        <taxon>Bacteria</taxon>
        <taxon>Pseudomonadati</taxon>
        <taxon>Pseudomonadota</taxon>
        <taxon>Gammaproteobacteria</taxon>
        <taxon>Legionellales</taxon>
        <taxon>Legionellaceae</taxon>
        <taxon>Legionella</taxon>
    </lineage>
</organism>
<protein>
    <recommendedName>
        <fullName evidence="1">Probable nicotinate-nucleotide adenylyltransferase</fullName>
        <ecNumber evidence="1">2.7.7.18</ecNumber>
    </recommendedName>
    <alternativeName>
        <fullName evidence="1">Deamido-NAD(+) diphosphorylase</fullName>
    </alternativeName>
    <alternativeName>
        <fullName evidence="1">Deamido-NAD(+) pyrophosphorylase</fullName>
    </alternativeName>
    <alternativeName>
        <fullName evidence="1">Nicotinate mononucleotide adenylyltransferase</fullName>
        <shortName evidence="1">NaMN adenylyltransferase</shortName>
    </alternativeName>
</protein>
<dbReference type="EC" id="2.7.7.18" evidence="1"/>
<dbReference type="EMBL" id="CP000675">
    <property type="protein sequence ID" value="ABQ54738.1"/>
    <property type="molecule type" value="Genomic_DNA"/>
</dbReference>
<dbReference type="RefSeq" id="WP_011946378.1">
    <property type="nucleotide sequence ID" value="NC_009494.2"/>
</dbReference>
<dbReference type="SMR" id="A5IBI8"/>
<dbReference type="KEGG" id="lpc:LPC_0761"/>
<dbReference type="HOGENOM" id="CLU_069765_0_0_6"/>
<dbReference type="UniPathway" id="UPA00253">
    <property type="reaction ID" value="UER00332"/>
</dbReference>
<dbReference type="GO" id="GO:0005524">
    <property type="term" value="F:ATP binding"/>
    <property type="evidence" value="ECO:0007669"/>
    <property type="project" value="UniProtKB-KW"/>
</dbReference>
<dbReference type="GO" id="GO:0004515">
    <property type="term" value="F:nicotinate-nucleotide adenylyltransferase activity"/>
    <property type="evidence" value="ECO:0007669"/>
    <property type="project" value="UniProtKB-UniRule"/>
</dbReference>
<dbReference type="GO" id="GO:0009435">
    <property type="term" value="P:NAD biosynthetic process"/>
    <property type="evidence" value="ECO:0007669"/>
    <property type="project" value="UniProtKB-UniRule"/>
</dbReference>
<dbReference type="CDD" id="cd02165">
    <property type="entry name" value="NMNAT"/>
    <property type="match status" value="1"/>
</dbReference>
<dbReference type="Gene3D" id="3.40.50.620">
    <property type="entry name" value="HUPs"/>
    <property type="match status" value="1"/>
</dbReference>
<dbReference type="HAMAP" id="MF_00244">
    <property type="entry name" value="NaMN_adenylyltr"/>
    <property type="match status" value="1"/>
</dbReference>
<dbReference type="InterPro" id="IPR004821">
    <property type="entry name" value="Cyt_trans-like"/>
</dbReference>
<dbReference type="InterPro" id="IPR005248">
    <property type="entry name" value="NadD/NMNAT"/>
</dbReference>
<dbReference type="InterPro" id="IPR014729">
    <property type="entry name" value="Rossmann-like_a/b/a_fold"/>
</dbReference>
<dbReference type="NCBIfam" id="TIGR00125">
    <property type="entry name" value="cyt_tran_rel"/>
    <property type="match status" value="1"/>
</dbReference>
<dbReference type="NCBIfam" id="TIGR00482">
    <property type="entry name" value="nicotinate (nicotinamide) nucleotide adenylyltransferase"/>
    <property type="match status" value="1"/>
</dbReference>
<dbReference type="NCBIfam" id="NF000839">
    <property type="entry name" value="PRK00071.1-1"/>
    <property type="match status" value="1"/>
</dbReference>
<dbReference type="PANTHER" id="PTHR39321">
    <property type="entry name" value="NICOTINATE-NUCLEOTIDE ADENYLYLTRANSFERASE-RELATED"/>
    <property type="match status" value="1"/>
</dbReference>
<dbReference type="PANTHER" id="PTHR39321:SF3">
    <property type="entry name" value="PHOSPHOPANTETHEINE ADENYLYLTRANSFERASE"/>
    <property type="match status" value="1"/>
</dbReference>
<dbReference type="Pfam" id="PF01467">
    <property type="entry name" value="CTP_transf_like"/>
    <property type="match status" value="1"/>
</dbReference>
<dbReference type="SUPFAM" id="SSF52374">
    <property type="entry name" value="Nucleotidylyl transferase"/>
    <property type="match status" value="1"/>
</dbReference>